<proteinExistence type="evidence at transcript level"/>
<feature type="chain" id="PRO_0000325090" description="Armadillo repeat-containing protein 2">
    <location>
        <begin position="1"/>
        <end position="854"/>
    </location>
</feature>
<feature type="repeat" description="ARM 1">
    <location>
        <begin position="255"/>
        <end position="294"/>
    </location>
</feature>
<feature type="repeat" description="ARM 2">
    <location>
        <begin position="298"/>
        <end position="337"/>
    </location>
</feature>
<feature type="repeat" description="ARM 3">
    <location>
        <begin position="356"/>
        <end position="396"/>
    </location>
</feature>
<feature type="repeat" description="ARM 4">
    <location>
        <begin position="401"/>
        <end position="442"/>
    </location>
</feature>
<feature type="repeat" description="ARM 5">
    <location>
        <begin position="455"/>
        <end position="496"/>
    </location>
</feature>
<feature type="repeat" description="ARM 6">
    <location>
        <begin position="499"/>
        <end position="540"/>
    </location>
</feature>
<feature type="repeat" description="ARM 7">
    <location>
        <begin position="544"/>
        <end position="583"/>
    </location>
</feature>
<feature type="repeat" description="ARM 8">
    <location>
        <begin position="585"/>
        <end position="605"/>
    </location>
</feature>
<feature type="repeat" description="ARM 9">
    <location>
        <begin position="606"/>
        <end position="649"/>
    </location>
</feature>
<feature type="repeat" description="ARM 10">
    <location>
        <begin position="651"/>
        <end position="692"/>
    </location>
</feature>
<feature type="repeat" description="ARM 11">
    <location>
        <begin position="694"/>
        <end position="733"/>
    </location>
</feature>
<feature type="repeat" description="ARM 12">
    <location>
        <begin position="735"/>
        <end position="777"/>
    </location>
</feature>
<feature type="region of interest" description="Disordered" evidence="1">
    <location>
        <begin position="1"/>
        <end position="116"/>
    </location>
</feature>
<feature type="region of interest" description="Disordered" evidence="1">
    <location>
        <begin position="140"/>
        <end position="194"/>
    </location>
</feature>
<feature type="region of interest" description="Disordered" evidence="1">
    <location>
        <begin position="206"/>
        <end position="255"/>
    </location>
</feature>
<feature type="compositionally biased region" description="Low complexity" evidence="1">
    <location>
        <begin position="58"/>
        <end position="73"/>
    </location>
</feature>
<feature type="compositionally biased region" description="Polar residues" evidence="1">
    <location>
        <begin position="74"/>
        <end position="87"/>
    </location>
</feature>
<feature type="compositionally biased region" description="Polar residues" evidence="1">
    <location>
        <begin position="162"/>
        <end position="187"/>
    </location>
</feature>
<feature type="splice variant" id="VSP_024495" description="In isoform 2." evidence="3">
    <location>
        <begin position="1"/>
        <end position="232"/>
    </location>
</feature>
<feature type="splice variant" id="VSP_024496" description="In isoform 2." evidence="3">
    <original>SDLSRKETR</original>
    <variation>MPFPSLHFF</variation>
    <location>
        <begin position="233"/>
        <end position="241"/>
    </location>
</feature>
<evidence type="ECO:0000256" key="1">
    <source>
        <dbReference type="SAM" id="MobiDB-lite"/>
    </source>
</evidence>
<evidence type="ECO:0000269" key="2">
    <source>
    </source>
</evidence>
<evidence type="ECO:0000303" key="3">
    <source>
    </source>
</evidence>
<evidence type="ECO:0000303" key="4">
    <source>
    </source>
</evidence>
<evidence type="ECO:0000305" key="5"/>
<evidence type="ECO:0000312" key="6">
    <source>
        <dbReference type="MGI" id="MGI:1916449"/>
    </source>
</evidence>
<keyword id="KW-0025">Alternative splicing</keyword>
<keyword id="KW-0221">Differentiation</keyword>
<keyword id="KW-1185">Reference proteome</keyword>
<keyword id="KW-0677">Repeat</keyword>
<keyword id="KW-0744">Spermatogenesis</keyword>
<sequence length="854" mass="95311">MLSSNDQKLEKLDSFYRPPVSKQRTSAEIISEARNALRTVRTQRPFTPREDQRKLFGPASSRSPENRPPSSFSLHASSFELSDSKPISGTRLRPLELKPKAPASPGTEDACLSFPKAPLDPAKIRKISGARARFYRAASQGMLLPDRSPPAAHSKTVDESSKPVSVGSSTARRNGTHLTASSATGQLKSPPLLTCDQGFQETTEQEVSLLSQLRRGGDPGKRRARASSCPSSSDLSRKETRAASRASSQEQETDTEVDEVFWKARIVPILHELENEEDIEEMCAACTQLHRTLEEARMLGKKFKRRTVLLKALYKLVDADSDPLSLKLAKLILALKVSGKNLLNVCKLIFKISRNEKNDTLMQEDNILESLLEVLRAEELQSNTEAFLYCMGALKFVSGSPGFLTEMVNKGAVEILAQLIKEMTEDTEKHGVCLPDSGHLLVQTTATLRNLVDSPLTRSKLLNMGAFPHLCTVMEQHADDKDICTNIARIFSKLTSYRDCCAALASYSRCYALFLSLLNKYQKNQDLVIRIVFILGNLTAKSNQARELFSRETGSVETLLTLFQSFYHHKENSPKLQLSEAKPQAEAEDVLVKLTRVLANIAIHPRIGPVLAANPRVVGLLLRTLESKSLGDCEELVINTIAAINNLSFYQVKSSVLQHRKLYVAELLLRLLVSNNMERILEAVRVFGNLSQDHDVCNFLMQKNVHKFMITLLEAKHQDICFSACGVLLNLTVDKEKRAILKEGGGIKKLVDCLRDFGPSDWQLACLVCKTLWNFSENITNASECFGDDVANTLLILLSTFLDEELALNGSFDQDLESYHRLHWETEFKPVAQQLLQRIQSHHSLLEPLPVPSF</sequence>
<comment type="function">
    <text evidence="2">Required for sperm flagellum axoneme organization and function (PubMed:30686508). Involved in axonemal central pair complex assembly and/or stability (PubMed:30686508).</text>
</comment>
<comment type="alternative products">
    <event type="alternative splicing"/>
    <isoform>
        <id>Q3URY6-1</id>
        <name>1</name>
        <sequence type="displayed"/>
    </isoform>
    <isoform>
        <id>Q3URY6-2</id>
        <name>2</name>
        <sequence type="described" ref="VSP_024495 VSP_024496"/>
    </isoform>
</comment>
<comment type="disruption phenotype">
    <text evidence="2">Male mice are infertile, while female fertility is not affected (PubMed:30686508). Spermatozoa exhibit multiple morphologic abnormalities including short, thick, and/or coiled flagella, whereas sperm heads conserve an overall typical hooked shape (PubMed:30686508).</text>
</comment>
<comment type="miscellaneous">
    <molecule>Isoform 2</molecule>
    <text evidence="5">Due to intron retention.</text>
</comment>
<gene>
    <name evidence="4 6" type="primary">Armc2</name>
</gene>
<dbReference type="EMBL" id="AK141039">
    <property type="protein sequence ID" value="BAE24551.1"/>
    <property type="molecule type" value="mRNA"/>
</dbReference>
<dbReference type="EMBL" id="AC165442">
    <property type="status" value="NOT_ANNOTATED_CDS"/>
    <property type="molecule type" value="Genomic_DNA"/>
</dbReference>
<dbReference type="EMBL" id="BM942469">
    <property type="status" value="NOT_ANNOTATED_CDS"/>
    <property type="molecule type" value="mRNA"/>
</dbReference>
<dbReference type="RefSeq" id="NP_001030030.2">
    <molecule id="Q3URY6-1"/>
    <property type="nucleotide sequence ID" value="NM_001034858.3"/>
</dbReference>
<dbReference type="RefSeq" id="XP_011241459.1">
    <property type="nucleotide sequence ID" value="XM_011243157.2"/>
</dbReference>
<dbReference type="RefSeq" id="XP_011241461.1">
    <molecule id="Q3URY6-1"/>
    <property type="nucleotide sequence ID" value="XM_011243159.2"/>
</dbReference>
<dbReference type="SMR" id="Q3URY6"/>
<dbReference type="BioGRID" id="229423">
    <property type="interactions" value="1"/>
</dbReference>
<dbReference type="FunCoup" id="Q3URY6">
    <property type="interactions" value="71"/>
</dbReference>
<dbReference type="STRING" id="10090.ENSMUSP00000125583"/>
<dbReference type="iPTMnet" id="Q3URY6"/>
<dbReference type="PhosphoSitePlus" id="Q3URY6"/>
<dbReference type="jPOST" id="Q3URY6"/>
<dbReference type="PaxDb" id="10090-ENSMUSP00000125583"/>
<dbReference type="ProteomicsDB" id="283270">
    <molecule id="Q3URY6-1"/>
</dbReference>
<dbReference type="ProteomicsDB" id="283271">
    <molecule id="Q3URY6-2"/>
</dbReference>
<dbReference type="Antibodypedia" id="19140">
    <property type="antibodies" value="17 antibodies from 7 providers"/>
</dbReference>
<dbReference type="Ensembl" id="ENSMUST00000095729.11">
    <molecule id="Q3URY6-1"/>
    <property type="protein sequence ID" value="ENSMUSP00000093397.5"/>
    <property type="gene ID" value="ENSMUSG00000071324.12"/>
</dbReference>
<dbReference type="Ensembl" id="ENSMUST00000160262.9">
    <molecule id="Q3URY6-1"/>
    <property type="protein sequence ID" value="ENSMUSP00000125412.3"/>
    <property type="gene ID" value="ENSMUSG00000071324.12"/>
</dbReference>
<dbReference type="GeneID" id="213402"/>
<dbReference type="KEGG" id="mmu:213402"/>
<dbReference type="UCSC" id="uc007eyg.3">
    <molecule id="Q3URY6-2"/>
    <property type="organism name" value="mouse"/>
</dbReference>
<dbReference type="UCSC" id="uc007eyh.3">
    <molecule id="Q3URY6-1"/>
    <property type="organism name" value="mouse"/>
</dbReference>
<dbReference type="AGR" id="MGI:1916449"/>
<dbReference type="CTD" id="84071"/>
<dbReference type="MGI" id="MGI:1916449">
    <property type="gene designation" value="Armc2"/>
</dbReference>
<dbReference type="VEuPathDB" id="HostDB:ENSMUSG00000071324"/>
<dbReference type="eggNOG" id="KOG1048">
    <property type="taxonomic scope" value="Eukaryota"/>
</dbReference>
<dbReference type="GeneTree" id="ENSGT00390000000663"/>
<dbReference type="HOGENOM" id="CLU_007173_0_0_1"/>
<dbReference type="InParanoid" id="Q3URY6"/>
<dbReference type="OMA" id="EACIYAY"/>
<dbReference type="OrthoDB" id="247006at2759"/>
<dbReference type="PhylomeDB" id="Q3URY6"/>
<dbReference type="BioGRID-ORCS" id="213402">
    <property type="hits" value="2 hits in 70 CRISPR screens"/>
</dbReference>
<dbReference type="ChiTaRS" id="Armc2">
    <property type="organism name" value="mouse"/>
</dbReference>
<dbReference type="PRO" id="PR:Q3URY6"/>
<dbReference type="Proteomes" id="UP000000589">
    <property type="component" value="Chromosome 10"/>
</dbReference>
<dbReference type="RNAct" id="Q3URY6">
    <property type="molecule type" value="protein"/>
</dbReference>
<dbReference type="Bgee" id="ENSMUSG00000071324">
    <property type="expression patterns" value="Expressed in spermatid and 66 other cell types or tissues"/>
</dbReference>
<dbReference type="ExpressionAtlas" id="Q3URY6">
    <property type="expression patterns" value="baseline and differential"/>
</dbReference>
<dbReference type="GO" id="GO:0000902">
    <property type="term" value="P:cell morphogenesis"/>
    <property type="evidence" value="ECO:0000316"/>
    <property type="project" value="MGI"/>
</dbReference>
<dbReference type="GO" id="GO:0044782">
    <property type="term" value="P:cilium organization"/>
    <property type="evidence" value="ECO:0000315"/>
    <property type="project" value="MGI"/>
</dbReference>
<dbReference type="GO" id="GO:0030317">
    <property type="term" value="P:flagellated sperm motility"/>
    <property type="evidence" value="ECO:0000315"/>
    <property type="project" value="MGI"/>
</dbReference>
<dbReference type="GO" id="GO:0006997">
    <property type="term" value="P:nucleus organization"/>
    <property type="evidence" value="ECO:0000316"/>
    <property type="project" value="MGI"/>
</dbReference>
<dbReference type="GO" id="GO:0007288">
    <property type="term" value="P:sperm axoneme assembly"/>
    <property type="evidence" value="ECO:0000315"/>
    <property type="project" value="UniProtKB"/>
</dbReference>
<dbReference type="GO" id="GO:0007283">
    <property type="term" value="P:spermatogenesis"/>
    <property type="evidence" value="ECO:0000315"/>
    <property type="project" value="MGI"/>
</dbReference>
<dbReference type="Gene3D" id="1.25.10.10">
    <property type="entry name" value="Leucine-rich Repeat Variant"/>
    <property type="match status" value="2"/>
</dbReference>
<dbReference type="InterPro" id="IPR011989">
    <property type="entry name" value="ARM-like"/>
</dbReference>
<dbReference type="InterPro" id="IPR016024">
    <property type="entry name" value="ARM-type_fold"/>
</dbReference>
<dbReference type="InterPro" id="IPR000225">
    <property type="entry name" value="Armadillo"/>
</dbReference>
<dbReference type="InterPro" id="IPR038905">
    <property type="entry name" value="ARMC2"/>
</dbReference>
<dbReference type="PANTHER" id="PTHR21356">
    <property type="entry name" value="ARMADILLO REPEAT CONTAINING 2"/>
    <property type="match status" value="1"/>
</dbReference>
<dbReference type="PANTHER" id="PTHR21356:SF1">
    <property type="entry name" value="ARMADILLO REPEAT-CONTAINING PROTEIN 2"/>
    <property type="match status" value="1"/>
</dbReference>
<dbReference type="SMART" id="SM00185">
    <property type="entry name" value="ARM"/>
    <property type="match status" value="8"/>
</dbReference>
<dbReference type="SUPFAM" id="SSF48371">
    <property type="entry name" value="ARM repeat"/>
    <property type="match status" value="1"/>
</dbReference>
<organism>
    <name type="scientific">Mus musculus</name>
    <name type="common">Mouse</name>
    <dbReference type="NCBI Taxonomy" id="10090"/>
    <lineage>
        <taxon>Eukaryota</taxon>
        <taxon>Metazoa</taxon>
        <taxon>Chordata</taxon>
        <taxon>Craniata</taxon>
        <taxon>Vertebrata</taxon>
        <taxon>Euteleostomi</taxon>
        <taxon>Mammalia</taxon>
        <taxon>Eutheria</taxon>
        <taxon>Euarchontoglires</taxon>
        <taxon>Glires</taxon>
        <taxon>Rodentia</taxon>
        <taxon>Myomorpha</taxon>
        <taxon>Muroidea</taxon>
        <taxon>Muridae</taxon>
        <taxon>Murinae</taxon>
        <taxon>Mus</taxon>
        <taxon>Mus</taxon>
    </lineage>
</organism>
<reference key="1">
    <citation type="journal article" date="2005" name="Science">
        <title>The transcriptional landscape of the mammalian genome.</title>
        <authorList>
            <person name="Carninci P."/>
            <person name="Kasukawa T."/>
            <person name="Katayama S."/>
            <person name="Gough J."/>
            <person name="Frith M.C."/>
            <person name="Maeda N."/>
            <person name="Oyama R."/>
            <person name="Ravasi T."/>
            <person name="Lenhard B."/>
            <person name="Wells C."/>
            <person name="Kodzius R."/>
            <person name="Shimokawa K."/>
            <person name="Bajic V.B."/>
            <person name="Brenner S.E."/>
            <person name="Batalov S."/>
            <person name="Forrest A.R."/>
            <person name="Zavolan M."/>
            <person name="Davis M.J."/>
            <person name="Wilming L.G."/>
            <person name="Aidinis V."/>
            <person name="Allen J.E."/>
            <person name="Ambesi-Impiombato A."/>
            <person name="Apweiler R."/>
            <person name="Aturaliya R.N."/>
            <person name="Bailey T.L."/>
            <person name="Bansal M."/>
            <person name="Baxter L."/>
            <person name="Beisel K.W."/>
            <person name="Bersano T."/>
            <person name="Bono H."/>
            <person name="Chalk A.M."/>
            <person name="Chiu K.P."/>
            <person name="Choudhary V."/>
            <person name="Christoffels A."/>
            <person name="Clutterbuck D.R."/>
            <person name="Crowe M.L."/>
            <person name="Dalla E."/>
            <person name="Dalrymple B.P."/>
            <person name="de Bono B."/>
            <person name="Della Gatta G."/>
            <person name="di Bernardo D."/>
            <person name="Down T."/>
            <person name="Engstrom P."/>
            <person name="Fagiolini M."/>
            <person name="Faulkner G."/>
            <person name="Fletcher C.F."/>
            <person name="Fukushima T."/>
            <person name="Furuno M."/>
            <person name="Futaki S."/>
            <person name="Gariboldi M."/>
            <person name="Georgii-Hemming P."/>
            <person name="Gingeras T.R."/>
            <person name="Gojobori T."/>
            <person name="Green R.E."/>
            <person name="Gustincich S."/>
            <person name="Harbers M."/>
            <person name="Hayashi Y."/>
            <person name="Hensch T.K."/>
            <person name="Hirokawa N."/>
            <person name="Hill D."/>
            <person name="Huminiecki L."/>
            <person name="Iacono M."/>
            <person name="Ikeo K."/>
            <person name="Iwama A."/>
            <person name="Ishikawa T."/>
            <person name="Jakt M."/>
            <person name="Kanapin A."/>
            <person name="Katoh M."/>
            <person name="Kawasawa Y."/>
            <person name="Kelso J."/>
            <person name="Kitamura H."/>
            <person name="Kitano H."/>
            <person name="Kollias G."/>
            <person name="Krishnan S.P."/>
            <person name="Kruger A."/>
            <person name="Kummerfeld S.K."/>
            <person name="Kurochkin I.V."/>
            <person name="Lareau L.F."/>
            <person name="Lazarevic D."/>
            <person name="Lipovich L."/>
            <person name="Liu J."/>
            <person name="Liuni S."/>
            <person name="McWilliam S."/>
            <person name="Madan Babu M."/>
            <person name="Madera M."/>
            <person name="Marchionni L."/>
            <person name="Matsuda H."/>
            <person name="Matsuzawa S."/>
            <person name="Miki H."/>
            <person name="Mignone F."/>
            <person name="Miyake S."/>
            <person name="Morris K."/>
            <person name="Mottagui-Tabar S."/>
            <person name="Mulder N."/>
            <person name="Nakano N."/>
            <person name="Nakauchi H."/>
            <person name="Ng P."/>
            <person name="Nilsson R."/>
            <person name="Nishiguchi S."/>
            <person name="Nishikawa S."/>
            <person name="Nori F."/>
            <person name="Ohara O."/>
            <person name="Okazaki Y."/>
            <person name="Orlando V."/>
            <person name="Pang K.C."/>
            <person name="Pavan W.J."/>
            <person name="Pavesi G."/>
            <person name="Pesole G."/>
            <person name="Petrovsky N."/>
            <person name="Piazza S."/>
            <person name="Reed J."/>
            <person name="Reid J.F."/>
            <person name="Ring B.Z."/>
            <person name="Ringwald M."/>
            <person name="Rost B."/>
            <person name="Ruan Y."/>
            <person name="Salzberg S.L."/>
            <person name="Sandelin A."/>
            <person name="Schneider C."/>
            <person name="Schoenbach C."/>
            <person name="Sekiguchi K."/>
            <person name="Semple C.A."/>
            <person name="Seno S."/>
            <person name="Sessa L."/>
            <person name="Sheng Y."/>
            <person name="Shibata Y."/>
            <person name="Shimada H."/>
            <person name="Shimada K."/>
            <person name="Silva D."/>
            <person name="Sinclair B."/>
            <person name="Sperling S."/>
            <person name="Stupka E."/>
            <person name="Sugiura K."/>
            <person name="Sultana R."/>
            <person name="Takenaka Y."/>
            <person name="Taki K."/>
            <person name="Tammoja K."/>
            <person name="Tan S.L."/>
            <person name="Tang S."/>
            <person name="Taylor M.S."/>
            <person name="Tegner J."/>
            <person name="Teichmann S.A."/>
            <person name="Ueda H.R."/>
            <person name="van Nimwegen E."/>
            <person name="Verardo R."/>
            <person name="Wei C.L."/>
            <person name="Yagi K."/>
            <person name="Yamanishi H."/>
            <person name="Zabarovsky E."/>
            <person name="Zhu S."/>
            <person name="Zimmer A."/>
            <person name="Hide W."/>
            <person name="Bult C."/>
            <person name="Grimmond S.M."/>
            <person name="Teasdale R.D."/>
            <person name="Liu E.T."/>
            <person name="Brusic V."/>
            <person name="Quackenbush J."/>
            <person name="Wahlestedt C."/>
            <person name="Mattick J.S."/>
            <person name="Hume D.A."/>
            <person name="Kai C."/>
            <person name="Sasaki D."/>
            <person name="Tomaru Y."/>
            <person name="Fukuda S."/>
            <person name="Kanamori-Katayama M."/>
            <person name="Suzuki M."/>
            <person name="Aoki J."/>
            <person name="Arakawa T."/>
            <person name="Iida J."/>
            <person name="Imamura K."/>
            <person name="Itoh M."/>
            <person name="Kato T."/>
            <person name="Kawaji H."/>
            <person name="Kawagashira N."/>
            <person name="Kawashima T."/>
            <person name="Kojima M."/>
            <person name="Kondo S."/>
            <person name="Konno H."/>
            <person name="Nakano K."/>
            <person name="Ninomiya N."/>
            <person name="Nishio T."/>
            <person name="Okada M."/>
            <person name="Plessy C."/>
            <person name="Shibata K."/>
            <person name="Shiraki T."/>
            <person name="Suzuki S."/>
            <person name="Tagami M."/>
            <person name="Waki K."/>
            <person name="Watahiki A."/>
            <person name="Okamura-Oho Y."/>
            <person name="Suzuki H."/>
            <person name="Kawai J."/>
            <person name="Hayashizaki Y."/>
        </authorList>
    </citation>
    <scope>NUCLEOTIDE SEQUENCE [LARGE SCALE MRNA] (ISOFORM 2)</scope>
    <source>
        <strain>C57BL/6J</strain>
        <tissue>Cerebellum</tissue>
    </source>
</reference>
<reference key="2">
    <citation type="journal article" date="2009" name="PLoS Biol.">
        <title>Lineage-specific biology revealed by a finished genome assembly of the mouse.</title>
        <authorList>
            <person name="Church D.M."/>
            <person name="Goodstadt L."/>
            <person name="Hillier L.W."/>
            <person name="Zody M.C."/>
            <person name="Goldstein S."/>
            <person name="She X."/>
            <person name="Bult C.J."/>
            <person name="Agarwala R."/>
            <person name="Cherry J.L."/>
            <person name="DiCuccio M."/>
            <person name="Hlavina W."/>
            <person name="Kapustin Y."/>
            <person name="Meric P."/>
            <person name="Maglott D."/>
            <person name="Birtle Z."/>
            <person name="Marques A.C."/>
            <person name="Graves T."/>
            <person name="Zhou S."/>
            <person name="Teague B."/>
            <person name="Potamousis K."/>
            <person name="Churas C."/>
            <person name="Place M."/>
            <person name="Herschleb J."/>
            <person name="Runnheim R."/>
            <person name="Forrest D."/>
            <person name="Amos-Landgraf J."/>
            <person name="Schwartz D.C."/>
            <person name="Cheng Z."/>
            <person name="Lindblad-Toh K."/>
            <person name="Eichler E.E."/>
            <person name="Ponting C.P."/>
        </authorList>
    </citation>
    <scope>NUCLEOTIDE SEQUENCE [LARGE SCALE GENOMIC DNA]</scope>
    <source>
        <strain>C57BL/6J</strain>
    </source>
</reference>
<reference key="3">
    <citation type="journal article" date="1996" name="Genome Res.">
        <title>Normalization and subtraction: two approaches to facilitate gene discovery.</title>
        <authorList>
            <person name="Bonaldo M.F."/>
            <person name="Lennon G."/>
            <person name="Soares M.B."/>
        </authorList>
    </citation>
    <scope>NUCLEOTIDE SEQUENCE [MRNA] OF 1-147 (ISOFORM 1)</scope>
    <source>
        <strain>C57BL/6J</strain>
    </source>
</reference>
<reference key="4">
    <citation type="journal article" date="2019" name="Am. J. Hum. Genet.">
        <title>Bi-allelic Mutations in ARMC2 lead to severe astheno-teratozoospermia due to sperm flagellum malformations in humans and mice.</title>
        <authorList>
            <person name="Coutton C."/>
            <person name="Martinez G."/>
            <person name="Kherraf Z.E."/>
            <person name="Amiri-Yekta A."/>
            <person name="Boguenet M."/>
            <person name="Saut A."/>
            <person name="He X."/>
            <person name="Zhang F."/>
            <person name="Cristou-Kent M."/>
            <person name="Escoffier J."/>
            <person name="Bidart M."/>
            <person name="Satre V."/>
            <person name="Conne B."/>
            <person name="Fourati Ben Mustapha S."/>
            <person name="Halouani L."/>
            <person name="Marrakchi O."/>
            <person name="Makni M."/>
            <person name="Latrous H."/>
            <person name="Kharouf M."/>
            <person name="Pernet-Gallay K."/>
            <person name="Bonhivers M."/>
            <person name="Hennebicq S."/>
            <person name="Rives N."/>
            <person name="Dulioust E."/>
            <person name="Toure A."/>
            <person name="Gourabi H."/>
            <person name="Cao Y."/>
            <person name="Zouari R."/>
            <person name="Hosseini S.H."/>
            <person name="Nef S."/>
            <person name="Thierry-Mieg N."/>
            <person name="Arnoult C."/>
            <person name="Ray P.F."/>
        </authorList>
    </citation>
    <scope>FUNCTION</scope>
    <scope>DISRUPTION PHENOTYPE</scope>
</reference>
<protein>
    <recommendedName>
        <fullName evidence="5">Armadillo repeat-containing protein 2</fullName>
    </recommendedName>
</protein>
<name>ARMC2_MOUSE</name>
<accession>Q3URY6</accession>